<evidence type="ECO:0000255" key="1">
    <source>
        <dbReference type="HAMAP-Rule" id="MF_01365"/>
    </source>
</evidence>
<evidence type="ECO:0000305" key="2"/>
<keyword id="KW-0687">Ribonucleoprotein</keyword>
<keyword id="KW-0689">Ribosomal protein</keyword>
<keyword id="KW-0694">RNA-binding</keyword>
<keyword id="KW-0699">rRNA-binding</keyword>
<comment type="function">
    <text evidence="1">This protein binds to the 23S rRNA, and is important in its secondary structure. It is located near the subunit interface in the base of the L7/L12 stalk, and near the tRNA binding site of the peptidyltransferase center.</text>
</comment>
<comment type="subunit">
    <text evidence="1">Part of the 50S ribosomal subunit.</text>
</comment>
<comment type="similarity">
    <text evidence="1">Belongs to the universal ribosomal protein uL6 family.</text>
</comment>
<gene>
    <name evidence="1" type="primary">rplF</name>
    <name type="ordered locus">Fjoh_0382</name>
</gene>
<name>RL6_FLAJ1</name>
<protein>
    <recommendedName>
        <fullName evidence="1">Large ribosomal subunit protein uL6</fullName>
    </recommendedName>
    <alternativeName>
        <fullName evidence="2">50S ribosomal protein L6</fullName>
    </alternativeName>
</protein>
<accession>A5FN06</accession>
<reference key="1">
    <citation type="journal article" date="2009" name="Appl. Environ. Microbiol.">
        <title>Novel features of the polysaccharide-digesting gliding bacterium Flavobacterium johnsoniae as revealed by genome sequence analysis.</title>
        <authorList>
            <person name="McBride M.J."/>
            <person name="Xie G."/>
            <person name="Martens E.C."/>
            <person name="Lapidus A."/>
            <person name="Henrissat B."/>
            <person name="Rhodes R.G."/>
            <person name="Goltsman E."/>
            <person name="Wang W."/>
            <person name="Xu J."/>
            <person name="Hunnicutt D.W."/>
            <person name="Staroscik A.M."/>
            <person name="Hoover T.R."/>
            <person name="Cheng Y.Q."/>
            <person name="Stein J.L."/>
        </authorList>
    </citation>
    <scope>NUCLEOTIDE SEQUENCE [LARGE SCALE GENOMIC DNA]</scope>
    <source>
        <strain>ATCC 17061 / DSM 2064 / JCM 8514 / BCRC 14874 / CCUG 350202 / NBRC 14942 / NCIMB 11054 / UW101</strain>
    </source>
</reference>
<sequence length="180" mass="19534">MSRIGKSPIVIPAGVTVEVKDGIITVKGKKGQLVQEFSDVNVTVEGDQVLVERSSDHKDHRAKHGLFRSLISNMVVGVSEGFTKELELVGVGYRASNQGQKLDLALGYSHNIVLEIAPEVSLETISEKGKNPIVKLTSFDKQLLGQVAAKIRGFRKPEPYKGKGVKFVGEVLRRKAGKSA</sequence>
<feature type="chain" id="PRO_1000087043" description="Large ribosomal subunit protein uL6">
    <location>
        <begin position="1"/>
        <end position="180"/>
    </location>
</feature>
<organism>
    <name type="scientific">Flavobacterium johnsoniae (strain ATCC 17061 / DSM 2064 / JCM 8514 / BCRC 14874 / CCUG 350202 / NBRC 14942 / NCIMB 11054 / UW101)</name>
    <name type="common">Cytophaga johnsonae</name>
    <dbReference type="NCBI Taxonomy" id="376686"/>
    <lineage>
        <taxon>Bacteria</taxon>
        <taxon>Pseudomonadati</taxon>
        <taxon>Bacteroidota</taxon>
        <taxon>Flavobacteriia</taxon>
        <taxon>Flavobacteriales</taxon>
        <taxon>Flavobacteriaceae</taxon>
        <taxon>Flavobacterium</taxon>
    </lineage>
</organism>
<proteinExistence type="inferred from homology"/>
<dbReference type="EMBL" id="CP000685">
    <property type="protein sequence ID" value="ABQ03418.1"/>
    <property type="molecule type" value="Genomic_DNA"/>
</dbReference>
<dbReference type="RefSeq" id="WP_012022483.1">
    <property type="nucleotide sequence ID" value="NZ_MUGZ01000005.1"/>
</dbReference>
<dbReference type="SMR" id="A5FN06"/>
<dbReference type="STRING" id="376686.Fjoh_0382"/>
<dbReference type="KEGG" id="fjo:Fjoh_0382"/>
<dbReference type="eggNOG" id="COG0097">
    <property type="taxonomic scope" value="Bacteria"/>
</dbReference>
<dbReference type="HOGENOM" id="CLU_065464_1_2_10"/>
<dbReference type="OrthoDB" id="9805007at2"/>
<dbReference type="Proteomes" id="UP000006694">
    <property type="component" value="Chromosome"/>
</dbReference>
<dbReference type="GO" id="GO:0022625">
    <property type="term" value="C:cytosolic large ribosomal subunit"/>
    <property type="evidence" value="ECO:0007669"/>
    <property type="project" value="TreeGrafter"/>
</dbReference>
<dbReference type="GO" id="GO:0019843">
    <property type="term" value="F:rRNA binding"/>
    <property type="evidence" value="ECO:0007669"/>
    <property type="project" value="UniProtKB-UniRule"/>
</dbReference>
<dbReference type="GO" id="GO:0003735">
    <property type="term" value="F:structural constituent of ribosome"/>
    <property type="evidence" value="ECO:0007669"/>
    <property type="project" value="InterPro"/>
</dbReference>
<dbReference type="GO" id="GO:0002181">
    <property type="term" value="P:cytoplasmic translation"/>
    <property type="evidence" value="ECO:0007669"/>
    <property type="project" value="TreeGrafter"/>
</dbReference>
<dbReference type="FunFam" id="3.90.930.12:FF:000002">
    <property type="entry name" value="50S ribosomal protein L6"/>
    <property type="match status" value="1"/>
</dbReference>
<dbReference type="Gene3D" id="3.90.930.12">
    <property type="entry name" value="Ribosomal protein L6, alpha-beta domain"/>
    <property type="match status" value="2"/>
</dbReference>
<dbReference type="HAMAP" id="MF_01365_B">
    <property type="entry name" value="Ribosomal_uL6_B"/>
    <property type="match status" value="1"/>
</dbReference>
<dbReference type="InterPro" id="IPR000702">
    <property type="entry name" value="Ribosomal_uL6-like"/>
</dbReference>
<dbReference type="InterPro" id="IPR036789">
    <property type="entry name" value="Ribosomal_uL6-like_a/b-dom_sf"/>
</dbReference>
<dbReference type="InterPro" id="IPR020040">
    <property type="entry name" value="Ribosomal_uL6_a/b-dom"/>
</dbReference>
<dbReference type="InterPro" id="IPR019906">
    <property type="entry name" value="Ribosomal_uL6_bac-type"/>
</dbReference>
<dbReference type="InterPro" id="IPR002358">
    <property type="entry name" value="Ribosomal_uL6_CS"/>
</dbReference>
<dbReference type="NCBIfam" id="TIGR03654">
    <property type="entry name" value="L6_bact"/>
    <property type="match status" value="1"/>
</dbReference>
<dbReference type="PANTHER" id="PTHR11655">
    <property type="entry name" value="60S/50S RIBOSOMAL PROTEIN L6/L9"/>
    <property type="match status" value="1"/>
</dbReference>
<dbReference type="PANTHER" id="PTHR11655:SF14">
    <property type="entry name" value="LARGE RIBOSOMAL SUBUNIT PROTEIN UL6M"/>
    <property type="match status" value="1"/>
</dbReference>
<dbReference type="Pfam" id="PF00347">
    <property type="entry name" value="Ribosomal_L6"/>
    <property type="match status" value="2"/>
</dbReference>
<dbReference type="PIRSF" id="PIRSF002162">
    <property type="entry name" value="Ribosomal_L6"/>
    <property type="match status" value="1"/>
</dbReference>
<dbReference type="PRINTS" id="PR00059">
    <property type="entry name" value="RIBOSOMALL6"/>
</dbReference>
<dbReference type="SUPFAM" id="SSF56053">
    <property type="entry name" value="Ribosomal protein L6"/>
    <property type="match status" value="2"/>
</dbReference>
<dbReference type="PROSITE" id="PS00525">
    <property type="entry name" value="RIBOSOMAL_L6_1"/>
    <property type="match status" value="1"/>
</dbReference>